<evidence type="ECO:0000250" key="1">
    <source>
        <dbReference type="UniProtKB" id="B3A0M2"/>
    </source>
</evidence>
<evidence type="ECO:0000255" key="2"/>
<evidence type="ECO:0000269" key="3">
    <source>
    </source>
</evidence>
<evidence type="ECO:0000269" key="4">
    <source>
    </source>
</evidence>
<evidence type="ECO:0000269" key="5">
    <source>
    </source>
</evidence>
<evidence type="ECO:0000303" key="6">
    <source>
    </source>
</evidence>
<evidence type="ECO:0000303" key="7">
    <source>
    </source>
</evidence>
<evidence type="ECO:0000305" key="8">
    <source>
    </source>
</evidence>
<comment type="function">
    <text evidence="1 4 5 6">Predominantly synthesizes ethanolamine-phosphorylceramide (EPC), with minimal sphingomyelin (SM)/inositol phosphorylceramide (IPC) synthase activity (PubMed:20457606, PubMed:21899277). Specificity is likely to be defined by residues in the lumenal catalytic domain that interact with the polar head groups of the phospholipid donors (PubMed:21899277). EPC is synthesized by both stages of the parasite life cycle, bloodstream forms (BSF) and procyclic forms (PCF), by transferring the phosphoethanolamine from a 1,2-diacyl-sn-glycero-3-phosphoethanolamine to an N-acylsphing-4-enine (ceramide) or an N-acylsphinganine (dihydroceramide) (By similarity). Similarly, SM is synthesized by transferring the phosphocholine from a 1,2-diacyl-sn-glycero-3-phosphocholine to ceramide or dihydroceramide by BSF and PCF, while IPC is confined to PCF (By similarity). The ceramide/dihydroceramide ratios are skewed towards dihydroceramide in PCF parasites and ceramide in BSF parasites, this is likely due to differential expression and/or regulation of dihydroceramide desaturase, the enzyme responsible for converting dihydroceramide to ceramide (PubMed:18699867).</text>
</comment>
<comment type="catalytic activity">
    <reaction evidence="4 5">
        <text>an N-acylsphing-4-enine + a 1,2-diacyl-sn-glycero-3-phosphoethanolamine = an N-acylsphing-4-enine 1-phosphoethanolamine + a 1,2-diacyl-sn-glycerol</text>
        <dbReference type="Rhea" id="RHEA:36079"/>
        <dbReference type="ChEBI" id="CHEBI:17815"/>
        <dbReference type="ChEBI" id="CHEBI:52639"/>
        <dbReference type="ChEBI" id="CHEBI:64612"/>
        <dbReference type="ChEBI" id="CHEBI:73203"/>
    </reaction>
    <physiologicalReaction direction="left-to-right" evidence="4 5">
        <dbReference type="Rhea" id="RHEA:36080"/>
    </physiologicalReaction>
</comment>
<comment type="catalytic activity">
    <reaction evidence="8">
        <text>an N-acylsphinganine + a 1,2-diacyl-sn-glycero-3-phosphoethanolamine = an N-acylsphinganine-1-phosphoethanolamine + a 1,2-diacyl-sn-glycerol</text>
        <dbReference type="Rhea" id="RHEA:42136"/>
        <dbReference type="ChEBI" id="CHEBI:17815"/>
        <dbReference type="ChEBI" id="CHEBI:31488"/>
        <dbReference type="ChEBI" id="CHEBI:64612"/>
        <dbReference type="ChEBI" id="CHEBI:78655"/>
    </reaction>
    <physiologicalReaction direction="left-to-right" evidence="8">
        <dbReference type="Rhea" id="RHEA:42137"/>
    </physiologicalReaction>
</comment>
<comment type="subcellular location">
    <subcellularLocation>
        <location evidence="2">Membrane</location>
        <topology evidence="2">Multi-pass membrane protein</topology>
    </subcellularLocation>
</comment>
<comment type="developmental stage">
    <text evidence="3">Expressed in both bloodstream and procyclic stage parasites.</text>
</comment>
<comment type="disruption phenotype">
    <text evidence="3">Elevated ceramide levels and growth arrest; cells were arrested in division but replication of DNA and organelles continued giving rise to cells containing multiple nuclei, kinetoplasts and flagella.</text>
</comment>
<comment type="similarity">
    <text evidence="2">Belongs to the sphingomyelin synthase family.</text>
</comment>
<name>SLS2_TRYBB</name>
<proteinExistence type="evidence at protein level"/>
<reference key="1">
    <citation type="journal article" date="2010" name="J. Biol. Chem.">
        <title>Cell-free synthesis and functional characterization of sphingolipid synthases from parasitic trypanosomatid protozoa.</title>
        <authorList>
            <person name="Sevova E.S."/>
            <person name="Goren M.A."/>
            <person name="Schwartz K.J."/>
            <person name="Hsu F.F."/>
            <person name="Turk J."/>
            <person name="Fox B.G."/>
            <person name="Bangs J.D."/>
        </authorList>
    </citation>
    <scope>NUCLEOTIDE SEQUENCE [GENOMIC DNA]</scope>
    <scope>FUNCTION</scope>
    <scope>CATALYTIC ACTIVITY</scope>
    <source>
        <strain evidence="4">427</strain>
    </source>
</reference>
<reference key="2">
    <citation type="journal article" date="2008" name="Mol. Microbiol.">
        <title>Developmentally regulated sphingolipid synthesis in African trypanosomes.</title>
        <authorList>
            <person name="Sutterwala S.S."/>
            <person name="Hsu F.F."/>
            <person name="Sevova E.S."/>
            <person name="Schwartz K.J."/>
            <person name="Zhang K."/>
            <person name="Key P."/>
            <person name="Turk J."/>
            <person name="Beverley S.M."/>
            <person name="Bangs J.D."/>
        </authorList>
    </citation>
    <scope>FUNCTION</scope>
    <scope>DEVELOPMENTAL STAGE</scope>
    <scope>DISRUPTION PHENOTYPE</scope>
    <source>
        <strain evidence="3">427</strain>
    </source>
</reference>
<reference key="3">
    <citation type="journal article" date="2011" name="Biochemistry">
        <title>Amino acid determinants of substrate selectivity in the Trypanosoma brucei sphingolipid synthase family.</title>
        <authorList>
            <person name="Goren M.A."/>
            <person name="Fox B.G."/>
            <person name="Bangs J.D."/>
        </authorList>
    </citation>
    <scope>FUNCTION</scope>
    <scope>CATALYTIC ACTIVITY</scope>
</reference>
<dbReference type="EC" id="2.7.8.-" evidence="4 5"/>
<dbReference type="GO" id="GO:0005789">
    <property type="term" value="C:endoplasmic reticulum membrane"/>
    <property type="evidence" value="ECO:0007669"/>
    <property type="project" value="TreeGrafter"/>
</dbReference>
<dbReference type="GO" id="GO:0000139">
    <property type="term" value="C:Golgi membrane"/>
    <property type="evidence" value="ECO:0007669"/>
    <property type="project" value="TreeGrafter"/>
</dbReference>
<dbReference type="GO" id="GO:0005886">
    <property type="term" value="C:plasma membrane"/>
    <property type="evidence" value="ECO:0007669"/>
    <property type="project" value="TreeGrafter"/>
</dbReference>
<dbReference type="GO" id="GO:0047493">
    <property type="term" value="F:ceramide cholinephosphotransferase activity"/>
    <property type="evidence" value="ECO:0007669"/>
    <property type="project" value="TreeGrafter"/>
</dbReference>
<dbReference type="GO" id="GO:0016301">
    <property type="term" value="F:kinase activity"/>
    <property type="evidence" value="ECO:0007669"/>
    <property type="project" value="UniProtKB-KW"/>
</dbReference>
<dbReference type="GO" id="GO:0033188">
    <property type="term" value="F:sphingomyelin synthase activity"/>
    <property type="evidence" value="ECO:0007669"/>
    <property type="project" value="TreeGrafter"/>
</dbReference>
<dbReference type="GO" id="GO:0046513">
    <property type="term" value="P:ceramide biosynthetic process"/>
    <property type="evidence" value="ECO:0007669"/>
    <property type="project" value="TreeGrafter"/>
</dbReference>
<dbReference type="InterPro" id="IPR045221">
    <property type="entry name" value="Sphingomyelin_synth-like"/>
</dbReference>
<dbReference type="InterPro" id="IPR025749">
    <property type="entry name" value="Sphingomyelin_synth-like_dom"/>
</dbReference>
<dbReference type="PANTHER" id="PTHR21290:SF25">
    <property type="entry name" value="SPHINGOMYELIN SYNTHASE-RELATED PROTEIN 1"/>
    <property type="match status" value="1"/>
</dbReference>
<dbReference type="PANTHER" id="PTHR21290">
    <property type="entry name" value="SPHINGOMYELIN SYNTHETASE"/>
    <property type="match status" value="1"/>
</dbReference>
<dbReference type="Pfam" id="PF14360">
    <property type="entry name" value="PAP2_C"/>
    <property type="match status" value="1"/>
</dbReference>
<protein>
    <recommendedName>
        <fullName evidence="7">Phosphatidylethanolamine:ceramide ethanolaminephosphotransferase</fullName>
        <shortName evidence="6 7">TbSLS2</shortName>
        <ecNumber evidence="4 5">2.7.8.-</ecNumber>
    </recommendedName>
    <alternativeName>
        <fullName evidence="7">Ethanolamine-phosphorylceramide synthase</fullName>
        <shortName evidence="7">EPC synthase</shortName>
    </alternativeName>
    <alternativeName>
        <fullName evidence="7">Sphingolipid synthase</fullName>
    </alternativeName>
</protein>
<sequence>MAVPPVEMYSGSFWNRMRKPLPLRTQVIRFTVVFVIVSFILVVALQITHERMPDPKVTKPLPDLGFELLTKVPGMYVLADCCIGFLNILSVFTAFKLYLLHRHCVGSGEPELPCNIPGVSRFFLSVWLCKENCRIELRNIHTIAWIRFITSYALLLLSRSIIMVVTSLPNPDDLCQNPPKIENRVKDILLTVLTAGAGSIHCGDLMYSGHTVILTLHLMFHWIYGAMVHWSFRPVVTVVAIFGYYCIVASRFHYTDDVLVAIYLTIATFIAVGHNADGAPWQLQLFIRWWPCCGANSREVAEDGVPVAIVIKNEEMMNFEGKS</sequence>
<feature type="chain" id="PRO_0000413854" description="Phosphatidylethanolamine:ceramide ethanolaminephosphotransferase">
    <location>
        <begin position="1"/>
        <end position="323"/>
    </location>
</feature>
<feature type="topological domain" description="Cytoplasmic" evidence="2">
    <location>
        <begin position="1"/>
        <end position="26"/>
    </location>
</feature>
<feature type="transmembrane region" description="Helical" evidence="2">
    <location>
        <begin position="27"/>
        <end position="47"/>
    </location>
</feature>
<feature type="topological domain" description="Extracellular" evidence="2">
    <location>
        <begin position="48"/>
        <end position="74"/>
    </location>
</feature>
<feature type="transmembrane region" description="Helical" evidence="2">
    <location>
        <begin position="75"/>
        <end position="95"/>
    </location>
</feature>
<feature type="topological domain" description="Cytoplasmic" evidence="2">
    <location>
        <begin position="96"/>
        <end position="147"/>
    </location>
</feature>
<feature type="transmembrane region" description="Helical" evidence="2">
    <location>
        <begin position="148"/>
        <end position="168"/>
    </location>
</feature>
<feature type="topological domain" description="Extracellular" evidence="2">
    <location>
        <begin position="169"/>
        <end position="187"/>
    </location>
</feature>
<feature type="transmembrane region" description="Helical" evidence="2">
    <location>
        <begin position="188"/>
        <end position="208"/>
    </location>
</feature>
<feature type="topological domain" description="Cytoplasmic" evidence="2">
    <location>
        <begin position="209"/>
        <end position="233"/>
    </location>
</feature>
<feature type="transmembrane region" description="Helical" evidence="2">
    <location>
        <begin position="234"/>
        <end position="254"/>
    </location>
</feature>
<feature type="topological domain" description="Extracellular" evidence="2">
    <location>
        <begin position="255"/>
        <end position="257"/>
    </location>
</feature>
<feature type="transmembrane region" description="Helical" evidence="2">
    <location>
        <begin position="258"/>
        <end position="278"/>
    </location>
</feature>
<feature type="topological domain" description="Cytoplasmic" evidence="2">
    <location>
        <begin position="279"/>
        <end position="323"/>
    </location>
</feature>
<organism>
    <name type="scientific">Trypanosoma brucei brucei</name>
    <dbReference type="NCBI Taxonomy" id="5702"/>
    <lineage>
        <taxon>Eukaryota</taxon>
        <taxon>Discoba</taxon>
        <taxon>Euglenozoa</taxon>
        <taxon>Kinetoplastea</taxon>
        <taxon>Metakinetoplastina</taxon>
        <taxon>Trypanosomatida</taxon>
        <taxon>Trypanosomatidae</taxon>
        <taxon>Trypanosoma</taxon>
    </lineage>
</organism>
<gene>
    <name evidence="6 7" type="primary">SLS2</name>
</gene>
<accession>B3A0M0</accession>
<keyword id="KW-0418">Kinase</keyword>
<keyword id="KW-0443">Lipid metabolism</keyword>
<keyword id="KW-0472">Membrane</keyword>
<keyword id="KW-0746">Sphingolipid metabolism</keyword>
<keyword id="KW-0808">Transferase</keyword>
<keyword id="KW-0812">Transmembrane</keyword>
<keyword id="KW-1133">Transmembrane helix</keyword>